<dbReference type="EC" id="2.7.7.101" evidence="1"/>
<dbReference type="EMBL" id="BA000018">
    <property type="protein sequence ID" value="BAB42654.1"/>
    <property type="molecule type" value="Genomic_DNA"/>
</dbReference>
<dbReference type="PIR" id="A89937">
    <property type="entry name" value="A89937"/>
</dbReference>
<dbReference type="RefSeq" id="WP_001217257.1">
    <property type="nucleotide sequence ID" value="NC_002745.2"/>
</dbReference>
<dbReference type="BMRB" id="P63965"/>
<dbReference type="SMR" id="P63965"/>
<dbReference type="EnsemblBacteria" id="BAB42654">
    <property type="protein sequence ID" value="BAB42654"/>
    <property type="gene ID" value="BAB42654"/>
</dbReference>
<dbReference type="KEGG" id="sau:SA1391"/>
<dbReference type="HOGENOM" id="CLU_013501_3_3_9"/>
<dbReference type="GO" id="GO:0005737">
    <property type="term" value="C:cytoplasm"/>
    <property type="evidence" value="ECO:0007669"/>
    <property type="project" value="TreeGrafter"/>
</dbReference>
<dbReference type="GO" id="GO:0000428">
    <property type="term" value="C:DNA-directed RNA polymerase complex"/>
    <property type="evidence" value="ECO:0007669"/>
    <property type="project" value="UniProtKB-KW"/>
</dbReference>
<dbReference type="GO" id="GO:1990077">
    <property type="term" value="C:primosome complex"/>
    <property type="evidence" value="ECO:0007669"/>
    <property type="project" value="UniProtKB-KW"/>
</dbReference>
<dbReference type="GO" id="GO:0005524">
    <property type="term" value="F:ATP binding"/>
    <property type="evidence" value="ECO:0007669"/>
    <property type="project" value="InterPro"/>
</dbReference>
<dbReference type="GO" id="GO:0003677">
    <property type="term" value="F:DNA binding"/>
    <property type="evidence" value="ECO:0007669"/>
    <property type="project" value="UniProtKB-KW"/>
</dbReference>
<dbReference type="GO" id="GO:0003678">
    <property type="term" value="F:DNA helicase activity"/>
    <property type="evidence" value="ECO:0007669"/>
    <property type="project" value="InterPro"/>
</dbReference>
<dbReference type="GO" id="GO:0003899">
    <property type="term" value="F:DNA-directed RNA polymerase activity"/>
    <property type="evidence" value="ECO:0007669"/>
    <property type="project" value="InterPro"/>
</dbReference>
<dbReference type="GO" id="GO:0008270">
    <property type="term" value="F:zinc ion binding"/>
    <property type="evidence" value="ECO:0007669"/>
    <property type="project" value="UniProtKB-UniRule"/>
</dbReference>
<dbReference type="GO" id="GO:0006269">
    <property type="term" value="P:DNA replication, synthesis of primer"/>
    <property type="evidence" value="ECO:0007669"/>
    <property type="project" value="UniProtKB-UniRule"/>
</dbReference>
<dbReference type="CDD" id="cd03364">
    <property type="entry name" value="TOPRIM_DnaG_primases"/>
    <property type="match status" value="1"/>
</dbReference>
<dbReference type="FunFam" id="3.90.580.10:FF:000001">
    <property type="entry name" value="DNA primase"/>
    <property type="match status" value="1"/>
</dbReference>
<dbReference type="FunFam" id="3.90.980.10:FF:000001">
    <property type="entry name" value="DNA primase"/>
    <property type="match status" value="1"/>
</dbReference>
<dbReference type="Gene3D" id="3.40.1360.10">
    <property type="match status" value="1"/>
</dbReference>
<dbReference type="Gene3D" id="3.90.980.10">
    <property type="entry name" value="DNA primase, catalytic core, N-terminal domain"/>
    <property type="match status" value="1"/>
</dbReference>
<dbReference type="Gene3D" id="1.10.860.10">
    <property type="entry name" value="DNAb Helicase, Chain A"/>
    <property type="match status" value="1"/>
</dbReference>
<dbReference type="Gene3D" id="1.20.50.20">
    <property type="entry name" value="DnaG, RNA polymerase domain, helical bundle"/>
    <property type="match status" value="1"/>
</dbReference>
<dbReference type="Gene3D" id="3.90.580.10">
    <property type="entry name" value="Zinc finger, CHC2-type domain"/>
    <property type="match status" value="1"/>
</dbReference>
<dbReference type="HAMAP" id="MF_00974">
    <property type="entry name" value="DNA_primase_DnaG"/>
    <property type="match status" value="1"/>
</dbReference>
<dbReference type="InterPro" id="IPR036185">
    <property type="entry name" value="DNA_heli_DnaB-like_N_sf"/>
</dbReference>
<dbReference type="InterPro" id="IPR016136">
    <property type="entry name" value="DNA_helicase_N/primase_C"/>
</dbReference>
<dbReference type="InterPro" id="IPR037068">
    <property type="entry name" value="DNA_primase_core_N_sf"/>
</dbReference>
<dbReference type="InterPro" id="IPR006295">
    <property type="entry name" value="DNA_primase_DnaG"/>
</dbReference>
<dbReference type="InterPro" id="IPR036977">
    <property type="entry name" value="DNA_primase_Znf_CHC2"/>
</dbReference>
<dbReference type="InterPro" id="IPR030846">
    <property type="entry name" value="DnaG_bac"/>
</dbReference>
<dbReference type="InterPro" id="IPR048453">
    <property type="entry name" value="DnaG_cat_HB"/>
</dbReference>
<dbReference type="InterPro" id="IPR013264">
    <property type="entry name" value="DNAG_N"/>
</dbReference>
<dbReference type="InterPro" id="IPR050219">
    <property type="entry name" value="DnaG_primase"/>
</dbReference>
<dbReference type="InterPro" id="IPR034151">
    <property type="entry name" value="TOPRIM_DnaG_bac"/>
</dbReference>
<dbReference type="InterPro" id="IPR006171">
    <property type="entry name" value="TOPRIM_dom"/>
</dbReference>
<dbReference type="InterPro" id="IPR002694">
    <property type="entry name" value="Znf_CHC2"/>
</dbReference>
<dbReference type="NCBIfam" id="TIGR01391">
    <property type="entry name" value="dnaG"/>
    <property type="match status" value="1"/>
</dbReference>
<dbReference type="PANTHER" id="PTHR30313">
    <property type="entry name" value="DNA PRIMASE"/>
    <property type="match status" value="1"/>
</dbReference>
<dbReference type="PANTHER" id="PTHR30313:SF2">
    <property type="entry name" value="DNA PRIMASE"/>
    <property type="match status" value="1"/>
</dbReference>
<dbReference type="Pfam" id="PF21650">
    <property type="entry name" value="DnaG_cat_HB"/>
    <property type="match status" value="1"/>
</dbReference>
<dbReference type="Pfam" id="PF08275">
    <property type="entry name" value="DNAG_N"/>
    <property type="match status" value="1"/>
</dbReference>
<dbReference type="Pfam" id="PF13155">
    <property type="entry name" value="Toprim_2"/>
    <property type="match status" value="1"/>
</dbReference>
<dbReference type="Pfam" id="PF01807">
    <property type="entry name" value="Zn_ribbon_DnaG"/>
    <property type="match status" value="1"/>
</dbReference>
<dbReference type="PIRSF" id="PIRSF002811">
    <property type="entry name" value="DnaG"/>
    <property type="match status" value="1"/>
</dbReference>
<dbReference type="SMART" id="SM00493">
    <property type="entry name" value="TOPRIM"/>
    <property type="match status" value="1"/>
</dbReference>
<dbReference type="SMART" id="SM00400">
    <property type="entry name" value="ZnF_CHCC"/>
    <property type="match status" value="1"/>
</dbReference>
<dbReference type="SUPFAM" id="SSF56731">
    <property type="entry name" value="DNA primase core"/>
    <property type="match status" value="1"/>
</dbReference>
<dbReference type="SUPFAM" id="SSF48024">
    <property type="entry name" value="N-terminal domain of DnaB helicase"/>
    <property type="match status" value="1"/>
</dbReference>
<dbReference type="SUPFAM" id="SSF57783">
    <property type="entry name" value="Zinc beta-ribbon"/>
    <property type="match status" value="1"/>
</dbReference>
<dbReference type="PROSITE" id="PS50880">
    <property type="entry name" value="TOPRIM"/>
    <property type="match status" value="1"/>
</dbReference>
<name>DNAG_STAAN</name>
<comment type="function">
    <text evidence="1">RNA polymerase that catalyzes the synthesis of short RNA molecules used as primers for DNA polymerase during DNA replication.</text>
</comment>
<comment type="catalytic activity">
    <reaction evidence="1">
        <text>ssDNA + n NTP = ssDNA/pppN(pN)n-1 hybrid + (n-1) diphosphate.</text>
        <dbReference type="EC" id="2.7.7.101"/>
    </reaction>
</comment>
<comment type="cofactor">
    <cofactor evidence="1">
        <name>Zn(2+)</name>
        <dbReference type="ChEBI" id="CHEBI:29105"/>
    </cofactor>
    <text evidence="1">Binds 1 zinc ion per monomer.</text>
</comment>
<comment type="cofactor">
    <cofactor evidence="1">
        <name>Mg(2+)</name>
        <dbReference type="ChEBI" id="CHEBI:18420"/>
    </cofactor>
    <text evidence="1">Binds two Mg(2+) per subunit.</text>
</comment>
<comment type="subunit">
    <text evidence="1">Monomer. Interacts with DnaB.</text>
</comment>
<comment type="domain">
    <text evidence="1">Contains an N-terminal zinc-binding domain, a central core domain that contains the primase activity, and a C-terminal DnaB-binding domain.</text>
</comment>
<comment type="similarity">
    <text evidence="1">Belongs to the DnaG primase family.</text>
</comment>
<protein>
    <recommendedName>
        <fullName evidence="1">DNA primase</fullName>
        <ecNumber evidence="1">2.7.7.101</ecNumber>
    </recommendedName>
</protein>
<reference key="1">
    <citation type="journal article" date="2001" name="Lancet">
        <title>Whole genome sequencing of meticillin-resistant Staphylococcus aureus.</title>
        <authorList>
            <person name="Kuroda M."/>
            <person name="Ohta T."/>
            <person name="Uchiyama I."/>
            <person name="Baba T."/>
            <person name="Yuzawa H."/>
            <person name="Kobayashi I."/>
            <person name="Cui L."/>
            <person name="Oguchi A."/>
            <person name="Aoki K."/>
            <person name="Nagai Y."/>
            <person name="Lian J.-Q."/>
            <person name="Ito T."/>
            <person name="Kanamori M."/>
            <person name="Matsumaru H."/>
            <person name="Maruyama A."/>
            <person name="Murakami H."/>
            <person name="Hosoyama A."/>
            <person name="Mizutani-Ui Y."/>
            <person name="Takahashi N.K."/>
            <person name="Sawano T."/>
            <person name="Inoue R."/>
            <person name="Kaito C."/>
            <person name="Sekimizu K."/>
            <person name="Hirakawa H."/>
            <person name="Kuhara S."/>
            <person name="Goto S."/>
            <person name="Yabuzaki J."/>
            <person name="Kanehisa M."/>
            <person name="Yamashita A."/>
            <person name="Oshima K."/>
            <person name="Furuya K."/>
            <person name="Yoshino C."/>
            <person name="Shiba T."/>
            <person name="Hattori M."/>
            <person name="Ogasawara N."/>
            <person name="Hayashi H."/>
            <person name="Hiramatsu K."/>
        </authorList>
    </citation>
    <scope>NUCLEOTIDE SEQUENCE [LARGE SCALE GENOMIC DNA]</scope>
    <source>
        <strain>N315</strain>
    </source>
</reference>
<keyword id="KW-0235">DNA replication</keyword>
<keyword id="KW-0238">DNA-binding</keyword>
<keyword id="KW-0240">DNA-directed RNA polymerase</keyword>
<keyword id="KW-0460">Magnesium</keyword>
<keyword id="KW-0479">Metal-binding</keyword>
<keyword id="KW-0548">Nucleotidyltransferase</keyword>
<keyword id="KW-0639">Primosome</keyword>
<keyword id="KW-0804">Transcription</keyword>
<keyword id="KW-0808">Transferase</keyword>
<keyword id="KW-0862">Zinc</keyword>
<keyword id="KW-0863">Zinc-finger</keyword>
<feature type="chain" id="PRO_0000180520" description="DNA primase">
    <location>
        <begin position="1"/>
        <end position="605"/>
    </location>
</feature>
<feature type="domain" description="Toprim" evidence="1">
    <location>
        <begin position="260"/>
        <end position="341"/>
    </location>
</feature>
<feature type="zinc finger region" description="CHC2-type" evidence="1">
    <location>
        <begin position="38"/>
        <end position="62"/>
    </location>
</feature>
<feature type="binding site" evidence="1">
    <location>
        <position position="266"/>
    </location>
    <ligand>
        <name>Mg(2+)</name>
        <dbReference type="ChEBI" id="CHEBI:18420"/>
        <label>1</label>
        <note>catalytic</note>
    </ligand>
</feature>
<feature type="binding site" evidence="1">
    <location>
        <position position="310"/>
    </location>
    <ligand>
        <name>Mg(2+)</name>
        <dbReference type="ChEBI" id="CHEBI:18420"/>
        <label>1</label>
        <note>catalytic</note>
    </ligand>
</feature>
<feature type="binding site" evidence="1">
    <location>
        <position position="310"/>
    </location>
    <ligand>
        <name>Mg(2+)</name>
        <dbReference type="ChEBI" id="CHEBI:18420"/>
        <label>2</label>
    </ligand>
</feature>
<feature type="binding site" evidence="1">
    <location>
        <position position="312"/>
    </location>
    <ligand>
        <name>Mg(2+)</name>
        <dbReference type="ChEBI" id="CHEBI:18420"/>
        <label>2</label>
    </ligand>
</feature>
<proteinExistence type="inferred from homology"/>
<gene>
    <name evidence="1" type="primary">dnaG</name>
    <name type="ordered locus">SA1391</name>
</gene>
<organism>
    <name type="scientific">Staphylococcus aureus (strain N315)</name>
    <dbReference type="NCBI Taxonomy" id="158879"/>
    <lineage>
        <taxon>Bacteria</taxon>
        <taxon>Bacillati</taxon>
        <taxon>Bacillota</taxon>
        <taxon>Bacilli</taxon>
        <taxon>Bacillales</taxon>
        <taxon>Staphylococcaceae</taxon>
        <taxon>Staphylococcus</taxon>
    </lineage>
</organism>
<accession>P63965</accession>
<accession>Q99TT4</accession>
<sequence>MRIDQSIINEIKDKTDILDLVSEYVKLEKRGRNYIGLCPFHDEKTPSFTVSEDKQICHCFGCKKGGNVFQFTQEIKDISFVEAVKELGDRVNVAVDIEATQSNSNVQIASDDLQMIEMHELIQEFYYYALTKTVEGEQALTYLQERGFTDALIKERGIGFAPDSSHFCHDFLQKKGYDIELAYEAGLLSRNEENFSYYDRFRNRIMFPLKNAQGRIVGYSGRTYTGQEPKYLNSPETPIFQKRKLLYNLDKARKSIRKLDEIVLLEGFMDVIKSDTAGLKNVVATMGTQLSDEHITFIRKLTSNITLMFDGDFAGSEATLKTGQHLLQQGLNVFVIQLPSGMDPDEYIGKYGNDAFTTFVKNDKKSFAHYKVSILKDEIAHNDLSYERYLKELSHDISLMKSSILQQKAINDVAPFFNVSPEQLANEIQFNQAPANYYPEDEYGGYDEYGGYIEPEPIGMAQFDNLSRQEKAERAFLKHLMRDKDTFLNYYESVDKDNFTNQHFKYVFEVLHDFYAENDQYNISDAVQYVNSNELRETLISLEQYNLNDEPYENEIDDYVNVINEKGQETIESLNHKLREATRIGDVELQKYYLQQIVAKNKERM</sequence>
<evidence type="ECO:0000255" key="1">
    <source>
        <dbReference type="HAMAP-Rule" id="MF_00974"/>
    </source>
</evidence>